<organism>
    <name type="scientific">Acinetobacter baylyi (strain ATCC 33305 / BD413 / ADP1)</name>
    <dbReference type="NCBI Taxonomy" id="62977"/>
    <lineage>
        <taxon>Bacteria</taxon>
        <taxon>Pseudomonadati</taxon>
        <taxon>Pseudomonadota</taxon>
        <taxon>Gammaproteobacteria</taxon>
        <taxon>Moraxellales</taxon>
        <taxon>Moraxellaceae</taxon>
        <taxon>Acinetobacter</taxon>
    </lineage>
</organism>
<evidence type="ECO:0000255" key="1">
    <source>
        <dbReference type="HAMAP-Rule" id="MF_01356"/>
    </source>
</evidence>
<name>NUOB_ACIAD</name>
<accession>Q6FE70</accession>
<keyword id="KW-0004">4Fe-4S</keyword>
<keyword id="KW-0997">Cell inner membrane</keyword>
<keyword id="KW-1003">Cell membrane</keyword>
<keyword id="KW-0408">Iron</keyword>
<keyword id="KW-0411">Iron-sulfur</keyword>
<keyword id="KW-0472">Membrane</keyword>
<keyword id="KW-0479">Metal-binding</keyword>
<keyword id="KW-0520">NAD</keyword>
<keyword id="KW-0874">Quinone</keyword>
<keyword id="KW-1278">Translocase</keyword>
<keyword id="KW-0813">Transport</keyword>
<keyword id="KW-0830">Ubiquinone</keyword>
<proteinExistence type="inferred from homology"/>
<sequence>MKYTLTRANPDANQYPLQERQVVNDPLQEEVNKNVFMTRLEDVLHNVVNWGRKNSVWPFNFGTSCCYVEYATTLTGVHDLSRFGAEVIRASPRQADLMIVAGTCFVKMAPVIQRLYEQMLEPKWVISMGACANSGGMYDIYSVVQGVDKIIPVDVYVPGCPPRPEALIQALMLLQDQIQLERRPLSAVIGDDLQPVYKPKMMPERDRKNAERIAVKNLRSMDEIK</sequence>
<gene>
    <name evidence="1" type="primary">nuoB</name>
    <name type="ordered locus">ACIAD0731</name>
</gene>
<feature type="chain" id="PRO_0000376110" description="NADH-quinone oxidoreductase subunit B">
    <location>
        <begin position="1"/>
        <end position="225"/>
    </location>
</feature>
<feature type="binding site" evidence="1">
    <location>
        <position position="65"/>
    </location>
    <ligand>
        <name>[4Fe-4S] cluster</name>
        <dbReference type="ChEBI" id="CHEBI:49883"/>
    </ligand>
</feature>
<feature type="binding site" evidence="1">
    <location>
        <position position="66"/>
    </location>
    <ligand>
        <name>[4Fe-4S] cluster</name>
        <dbReference type="ChEBI" id="CHEBI:49883"/>
    </ligand>
</feature>
<feature type="binding site" evidence="1">
    <location>
        <position position="131"/>
    </location>
    <ligand>
        <name>[4Fe-4S] cluster</name>
        <dbReference type="ChEBI" id="CHEBI:49883"/>
    </ligand>
</feature>
<feature type="binding site" evidence="1">
    <location>
        <position position="160"/>
    </location>
    <ligand>
        <name>[4Fe-4S] cluster</name>
        <dbReference type="ChEBI" id="CHEBI:49883"/>
    </ligand>
</feature>
<protein>
    <recommendedName>
        <fullName evidence="1">NADH-quinone oxidoreductase subunit B</fullName>
        <ecNumber evidence="1">7.1.1.-</ecNumber>
    </recommendedName>
    <alternativeName>
        <fullName evidence="1">NADH dehydrogenase I subunit B</fullName>
    </alternativeName>
    <alternativeName>
        <fullName evidence="1">NDH-1 subunit B</fullName>
    </alternativeName>
</protein>
<comment type="function">
    <text evidence="1">NDH-1 shuttles electrons from NADH, via FMN and iron-sulfur (Fe-S) centers, to quinones in the respiratory chain. The immediate electron acceptor for the enzyme in this species is believed to be ubiquinone. Couples the redox reaction to proton translocation (for every two electrons transferred, four hydrogen ions are translocated across the cytoplasmic membrane), and thus conserves the redox energy in a proton gradient.</text>
</comment>
<comment type="catalytic activity">
    <reaction evidence="1">
        <text>a quinone + NADH + 5 H(+)(in) = a quinol + NAD(+) + 4 H(+)(out)</text>
        <dbReference type="Rhea" id="RHEA:57888"/>
        <dbReference type="ChEBI" id="CHEBI:15378"/>
        <dbReference type="ChEBI" id="CHEBI:24646"/>
        <dbReference type="ChEBI" id="CHEBI:57540"/>
        <dbReference type="ChEBI" id="CHEBI:57945"/>
        <dbReference type="ChEBI" id="CHEBI:132124"/>
    </reaction>
</comment>
<comment type="cofactor">
    <cofactor evidence="1">
        <name>[4Fe-4S] cluster</name>
        <dbReference type="ChEBI" id="CHEBI:49883"/>
    </cofactor>
    <text evidence="1">Binds 1 [4Fe-4S] cluster.</text>
</comment>
<comment type="subunit">
    <text evidence="1">NDH-1 is composed of 14 different subunits. Subunits NuoB, C, D, E, F, and G constitute the peripheral sector of the complex.</text>
</comment>
<comment type="subcellular location">
    <subcellularLocation>
        <location evidence="1">Cell inner membrane</location>
        <topology evidence="1">Peripheral membrane protein</topology>
        <orientation evidence="1">Cytoplasmic side</orientation>
    </subcellularLocation>
</comment>
<comment type="similarity">
    <text evidence="1">Belongs to the complex I 20 kDa subunit family.</text>
</comment>
<dbReference type="EC" id="7.1.1.-" evidence="1"/>
<dbReference type="EMBL" id="CR543861">
    <property type="protein sequence ID" value="CAG67638.1"/>
    <property type="molecule type" value="Genomic_DNA"/>
</dbReference>
<dbReference type="RefSeq" id="WP_004922528.1">
    <property type="nucleotide sequence ID" value="NC_005966.1"/>
</dbReference>
<dbReference type="SMR" id="Q6FE70"/>
<dbReference type="STRING" id="202950.GCA_001485005_02488"/>
<dbReference type="GeneID" id="45233197"/>
<dbReference type="KEGG" id="aci:ACIAD0731"/>
<dbReference type="eggNOG" id="COG0377">
    <property type="taxonomic scope" value="Bacteria"/>
</dbReference>
<dbReference type="HOGENOM" id="CLU_055737_7_3_6"/>
<dbReference type="OrthoDB" id="9786737at2"/>
<dbReference type="BioCyc" id="ASP62977:ACIAD_RS03345-MONOMER"/>
<dbReference type="Proteomes" id="UP000000430">
    <property type="component" value="Chromosome"/>
</dbReference>
<dbReference type="GO" id="GO:0005886">
    <property type="term" value="C:plasma membrane"/>
    <property type="evidence" value="ECO:0007669"/>
    <property type="project" value="UniProtKB-SubCell"/>
</dbReference>
<dbReference type="GO" id="GO:0045271">
    <property type="term" value="C:respiratory chain complex I"/>
    <property type="evidence" value="ECO:0007669"/>
    <property type="project" value="TreeGrafter"/>
</dbReference>
<dbReference type="GO" id="GO:0051539">
    <property type="term" value="F:4 iron, 4 sulfur cluster binding"/>
    <property type="evidence" value="ECO:0007669"/>
    <property type="project" value="UniProtKB-KW"/>
</dbReference>
<dbReference type="GO" id="GO:0005506">
    <property type="term" value="F:iron ion binding"/>
    <property type="evidence" value="ECO:0007669"/>
    <property type="project" value="UniProtKB-UniRule"/>
</dbReference>
<dbReference type="GO" id="GO:0008137">
    <property type="term" value="F:NADH dehydrogenase (ubiquinone) activity"/>
    <property type="evidence" value="ECO:0007669"/>
    <property type="project" value="InterPro"/>
</dbReference>
<dbReference type="GO" id="GO:0050136">
    <property type="term" value="F:NADH:ubiquinone reductase (non-electrogenic) activity"/>
    <property type="evidence" value="ECO:0007669"/>
    <property type="project" value="UniProtKB-UniRule"/>
</dbReference>
<dbReference type="GO" id="GO:0048038">
    <property type="term" value="F:quinone binding"/>
    <property type="evidence" value="ECO:0007669"/>
    <property type="project" value="UniProtKB-KW"/>
</dbReference>
<dbReference type="GO" id="GO:0009060">
    <property type="term" value="P:aerobic respiration"/>
    <property type="evidence" value="ECO:0007669"/>
    <property type="project" value="TreeGrafter"/>
</dbReference>
<dbReference type="GO" id="GO:0015990">
    <property type="term" value="P:electron transport coupled proton transport"/>
    <property type="evidence" value="ECO:0007669"/>
    <property type="project" value="TreeGrafter"/>
</dbReference>
<dbReference type="FunFam" id="3.40.50.12280:FF:000002">
    <property type="entry name" value="NADH-quinone oxidoreductase subunit B"/>
    <property type="match status" value="1"/>
</dbReference>
<dbReference type="Gene3D" id="3.40.50.12280">
    <property type="match status" value="1"/>
</dbReference>
<dbReference type="HAMAP" id="MF_01356">
    <property type="entry name" value="NDH1_NuoB"/>
    <property type="match status" value="1"/>
</dbReference>
<dbReference type="InterPro" id="IPR006137">
    <property type="entry name" value="NADH_UbQ_OxRdtase-like_20kDa"/>
</dbReference>
<dbReference type="InterPro" id="IPR006138">
    <property type="entry name" value="NADH_UQ_OxRdtase_20Kd_su"/>
</dbReference>
<dbReference type="NCBIfam" id="TIGR01957">
    <property type="entry name" value="nuoB_fam"/>
    <property type="match status" value="1"/>
</dbReference>
<dbReference type="NCBIfam" id="NF005012">
    <property type="entry name" value="PRK06411.1"/>
    <property type="match status" value="1"/>
</dbReference>
<dbReference type="PANTHER" id="PTHR11995">
    <property type="entry name" value="NADH DEHYDROGENASE"/>
    <property type="match status" value="1"/>
</dbReference>
<dbReference type="PANTHER" id="PTHR11995:SF14">
    <property type="entry name" value="NADH DEHYDROGENASE [UBIQUINONE] IRON-SULFUR PROTEIN 7, MITOCHONDRIAL"/>
    <property type="match status" value="1"/>
</dbReference>
<dbReference type="Pfam" id="PF01058">
    <property type="entry name" value="Oxidored_q6"/>
    <property type="match status" value="1"/>
</dbReference>
<dbReference type="SUPFAM" id="SSF56770">
    <property type="entry name" value="HydA/Nqo6-like"/>
    <property type="match status" value="1"/>
</dbReference>
<dbReference type="PROSITE" id="PS01150">
    <property type="entry name" value="COMPLEX1_20K"/>
    <property type="match status" value="1"/>
</dbReference>
<reference key="1">
    <citation type="journal article" date="2004" name="Nucleic Acids Res.">
        <title>Unique features revealed by the genome sequence of Acinetobacter sp. ADP1, a versatile and naturally transformation competent bacterium.</title>
        <authorList>
            <person name="Barbe V."/>
            <person name="Vallenet D."/>
            <person name="Fonknechten N."/>
            <person name="Kreimeyer A."/>
            <person name="Oztas S."/>
            <person name="Labarre L."/>
            <person name="Cruveiller S."/>
            <person name="Robert C."/>
            <person name="Duprat S."/>
            <person name="Wincker P."/>
            <person name="Ornston L.N."/>
            <person name="Weissenbach J."/>
            <person name="Marliere P."/>
            <person name="Cohen G.N."/>
            <person name="Medigue C."/>
        </authorList>
    </citation>
    <scope>NUCLEOTIDE SEQUENCE [LARGE SCALE GENOMIC DNA]</scope>
    <source>
        <strain>ATCC 33305 / BD413 / ADP1</strain>
    </source>
</reference>